<evidence type="ECO:0000255" key="1">
    <source>
        <dbReference type="HAMAP-Rule" id="MF_00318"/>
    </source>
</evidence>
<gene>
    <name evidence="1" type="primary">eno</name>
    <name type="ordered locus">CTC_00382</name>
</gene>
<reference key="1">
    <citation type="journal article" date="2003" name="Proc. Natl. Acad. Sci. U.S.A.">
        <title>The genome sequence of Clostridium tetani, the causative agent of tetanus disease.</title>
        <authorList>
            <person name="Brueggemann H."/>
            <person name="Baeumer S."/>
            <person name="Fricke W.F."/>
            <person name="Wiezer A."/>
            <person name="Liesegang H."/>
            <person name="Decker I."/>
            <person name="Herzberg C."/>
            <person name="Martinez-Arias R."/>
            <person name="Merkl R."/>
            <person name="Henne A."/>
            <person name="Gottschalk G."/>
        </authorList>
    </citation>
    <scope>NUCLEOTIDE SEQUENCE [LARGE SCALE GENOMIC DNA]</scope>
    <source>
        <strain>Massachusetts / E88</strain>
    </source>
</reference>
<organism>
    <name type="scientific">Clostridium tetani (strain Massachusetts / E88)</name>
    <dbReference type="NCBI Taxonomy" id="212717"/>
    <lineage>
        <taxon>Bacteria</taxon>
        <taxon>Bacillati</taxon>
        <taxon>Bacillota</taxon>
        <taxon>Clostridia</taxon>
        <taxon>Eubacteriales</taxon>
        <taxon>Clostridiaceae</taxon>
        <taxon>Clostridium</taxon>
    </lineage>
</organism>
<feature type="chain" id="PRO_0000133873" description="Enolase">
    <location>
        <begin position="1"/>
        <end position="431"/>
    </location>
</feature>
<feature type="active site" description="Proton donor" evidence="1">
    <location>
        <position position="208"/>
    </location>
</feature>
<feature type="active site" description="Proton acceptor" evidence="1">
    <location>
        <position position="340"/>
    </location>
</feature>
<feature type="binding site" evidence="1">
    <location>
        <position position="166"/>
    </location>
    <ligand>
        <name>(2R)-2-phosphoglycerate</name>
        <dbReference type="ChEBI" id="CHEBI:58289"/>
    </ligand>
</feature>
<feature type="binding site" evidence="1">
    <location>
        <position position="245"/>
    </location>
    <ligand>
        <name>Mg(2+)</name>
        <dbReference type="ChEBI" id="CHEBI:18420"/>
    </ligand>
</feature>
<feature type="binding site" evidence="1">
    <location>
        <position position="288"/>
    </location>
    <ligand>
        <name>Mg(2+)</name>
        <dbReference type="ChEBI" id="CHEBI:18420"/>
    </ligand>
</feature>
<feature type="binding site" evidence="1">
    <location>
        <position position="315"/>
    </location>
    <ligand>
        <name>Mg(2+)</name>
        <dbReference type="ChEBI" id="CHEBI:18420"/>
    </ligand>
</feature>
<feature type="binding site" evidence="1">
    <location>
        <position position="340"/>
    </location>
    <ligand>
        <name>(2R)-2-phosphoglycerate</name>
        <dbReference type="ChEBI" id="CHEBI:58289"/>
    </ligand>
</feature>
<feature type="binding site" evidence="1">
    <location>
        <position position="369"/>
    </location>
    <ligand>
        <name>(2R)-2-phosphoglycerate</name>
        <dbReference type="ChEBI" id="CHEBI:58289"/>
    </ligand>
</feature>
<feature type="binding site" evidence="1">
    <location>
        <position position="370"/>
    </location>
    <ligand>
        <name>(2R)-2-phosphoglycerate</name>
        <dbReference type="ChEBI" id="CHEBI:58289"/>
    </ligand>
</feature>
<feature type="binding site" evidence="1">
    <location>
        <position position="391"/>
    </location>
    <ligand>
        <name>(2R)-2-phosphoglycerate</name>
        <dbReference type="ChEBI" id="CHEBI:58289"/>
    </ligand>
</feature>
<name>ENO_CLOTE</name>
<keyword id="KW-0963">Cytoplasm</keyword>
<keyword id="KW-0324">Glycolysis</keyword>
<keyword id="KW-0456">Lyase</keyword>
<keyword id="KW-0460">Magnesium</keyword>
<keyword id="KW-0479">Metal-binding</keyword>
<keyword id="KW-1185">Reference proteome</keyword>
<keyword id="KW-0964">Secreted</keyword>
<comment type="function">
    <text evidence="1">Catalyzes the reversible conversion of 2-phosphoglycerate (2-PG) into phosphoenolpyruvate (PEP). It is essential for the degradation of carbohydrates via glycolysis.</text>
</comment>
<comment type="catalytic activity">
    <reaction evidence="1">
        <text>(2R)-2-phosphoglycerate = phosphoenolpyruvate + H2O</text>
        <dbReference type="Rhea" id="RHEA:10164"/>
        <dbReference type="ChEBI" id="CHEBI:15377"/>
        <dbReference type="ChEBI" id="CHEBI:58289"/>
        <dbReference type="ChEBI" id="CHEBI:58702"/>
        <dbReference type="EC" id="4.2.1.11"/>
    </reaction>
</comment>
<comment type="cofactor">
    <cofactor evidence="1">
        <name>Mg(2+)</name>
        <dbReference type="ChEBI" id="CHEBI:18420"/>
    </cofactor>
    <text evidence="1">Binds a second Mg(2+) ion via substrate during catalysis.</text>
</comment>
<comment type="pathway">
    <text evidence="1">Carbohydrate degradation; glycolysis; pyruvate from D-glyceraldehyde 3-phosphate: step 4/5.</text>
</comment>
<comment type="subcellular location">
    <subcellularLocation>
        <location evidence="1">Cytoplasm</location>
    </subcellularLocation>
    <subcellularLocation>
        <location evidence="1">Secreted</location>
    </subcellularLocation>
    <subcellularLocation>
        <location evidence="1">Cell surface</location>
    </subcellularLocation>
    <text evidence="1">Fractions of enolase are present in both the cytoplasm and on the cell surface.</text>
</comment>
<comment type="similarity">
    <text evidence="1">Belongs to the enolase family.</text>
</comment>
<sequence length="431" mass="46577">MKNYIEIIDVSARQVLDSRSNPTVEVDVILEDGTTGRAAVPSGASTGIFEAVELRDGDKSVYNGKGVLKAIENVNTIIAEELVGMNVLDQIAIDKTMIELDGTDNKGKLGANAMLGVSLACAKAAAEYLGLSLYQYIGGVNAKVLPVPMMNIINGGEHADNNVDLQEFMIMPAGASSFSEALRMCSEVYHSLKSLLKAKGYDTGVGDEGGFAPNLNSNEEAIQVIVEAIEKAGYKPGVEIFIALDPASSEIFEDGKYNLKGEGKVLTPQEMVDYYANLVAKYPIISIEDGMAEEDWEGWRLITERLGTKIQLVGDDLFVTNTDRLTMGIERGVANSILIKLNQIGTLTETLNAIEMAERAGYTAVVSHRSGETEDTTIADLVVAVNAGQIKTGAPARSERVAKYNQLLRIEDELGEMGEYRGLKAFYNIKK</sequence>
<accession>Q898R0</accession>
<dbReference type="EC" id="4.2.1.11" evidence="1"/>
<dbReference type="EMBL" id="AE015927">
    <property type="protein sequence ID" value="AAO35019.1"/>
    <property type="molecule type" value="Genomic_DNA"/>
</dbReference>
<dbReference type="RefSeq" id="WP_011098690.1">
    <property type="nucleotide sequence ID" value="NC_004557.1"/>
</dbReference>
<dbReference type="SMR" id="Q898R0"/>
<dbReference type="STRING" id="212717.CTC_00382"/>
<dbReference type="GeneID" id="24253087"/>
<dbReference type="KEGG" id="ctc:CTC_00382"/>
<dbReference type="HOGENOM" id="CLU_031223_2_1_9"/>
<dbReference type="OrthoDB" id="9804716at2"/>
<dbReference type="UniPathway" id="UPA00109">
    <property type="reaction ID" value="UER00187"/>
</dbReference>
<dbReference type="Proteomes" id="UP000001412">
    <property type="component" value="Chromosome"/>
</dbReference>
<dbReference type="GO" id="GO:0009986">
    <property type="term" value="C:cell surface"/>
    <property type="evidence" value="ECO:0007669"/>
    <property type="project" value="UniProtKB-SubCell"/>
</dbReference>
<dbReference type="GO" id="GO:0005576">
    <property type="term" value="C:extracellular region"/>
    <property type="evidence" value="ECO:0007669"/>
    <property type="project" value="UniProtKB-SubCell"/>
</dbReference>
<dbReference type="GO" id="GO:0000015">
    <property type="term" value="C:phosphopyruvate hydratase complex"/>
    <property type="evidence" value="ECO:0007669"/>
    <property type="project" value="InterPro"/>
</dbReference>
<dbReference type="GO" id="GO:0000287">
    <property type="term" value="F:magnesium ion binding"/>
    <property type="evidence" value="ECO:0007669"/>
    <property type="project" value="UniProtKB-UniRule"/>
</dbReference>
<dbReference type="GO" id="GO:0004634">
    <property type="term" value="F:phosphopyruvate hydratase activity"/>
    <property type="evidence" value="ECO:0007669"/>
    <property type="project" value="UniProtKB-UniRule"/>
</dbReference>
<dbReference type="GO" id="GO:0006096">
    <property type="term" value="P:glycolytic process"/>
    <property type="evidence" value="ECO:0007669"/>
    <property type="project" value="UniProtKB-UniRule"/>
</dbReference>
<dbReference type="CDD" id="cd03313">
    <property type="entry name" value="enolase"/>
    <property type="match status" value="1"/>
</dbReference>
<dbReference type="FunFam" id="3.20.20.120:FF:000001">
    <property type="entry name" value="Enolase"/>
    <property type="match status" value="1"/>
</dbReference>
<dbReference type="FunFam" id="3.30.390.10:FF:000001">
    <property type="entry name" value="Enolase"/>
    <property type="match status" value="1"/>
</dbReference>
<dbReference type="Gene3D" id="3.20.20.120">
    <property type="entry name" value="Enolase-like C-terminal domain"/>
    <property type="match status" value="1"/>
</dbReference>
<dbReference type="Gene3D" id="3.30.390.10">
    <property type="entry name" value="Enolase-like, N-terminal domain"/>
    <property type="match status" value="1"/>
</dbReference>
<dbReference type="HAMAP" id="MF_00318">
    <property type="entry name" value="Enolase"/>
    <property type="match status" value="1"/>
</dbReference>
<dbReference type="InterPro" id="IPR000941">
    <property type="entry name" value="Enolase"/>
</dbReference>
<dbReference type="InterPro" id="IPR036849">
    <property type="entry name" value="Enolase-like_C_sf"/>
</dbReference>
<dbReference type="InterPro" id="IPR029017">
    <property type="entry name" value="Enolase-like_N"/>
</dbReference>
<dbReference type="InterPro" id="IPR020810">
    <property type="entry name" value="Enolase_C"/>
</dbReference>
<dbReference type="InterPro" id="IPR020809">
    <property type="entry name" value="Enolase_CS"/>
</dbReference>
<dbReference type="InterPro" id="IPR020811">
    <property type="entry name" value="Enolase_N"/>
</dbReference>
<dbReference type="NCBIfam" id="TIGR01060">
    <property type="entry name" value="eno"/>
    <property type="match status" value="1"/>
</dbReference>
<dbReference type="PANTHER" id="PTHR11902">
    <property type="entry name" value="ENOLASE"/>
    <property type="match status" value="1"/>
</dbReference>
<dbReference type="PANTHER" id="PTHR11902:SF1">
    <property type="entry name" value="ENOLASE"/>
    <property type="match status" value="1"/>
</dbReference>
<dbReference type="Pfam" id="PF00113">
    <property type="entry name" value="Enolase_C"/>
    <property type="match status" value="1"/>
</dbReference>
<dbReference type="Pfam" id="PF03952">
    <property type="entry name" value="Enolase_N"/>
    <property type="match status" value="1"/>
</dbReference>
<dbReference type="PIRSF" id="PIRSF001400">
    <property type="entry name" value="Enolase"/>
    <property type="match status" value="1"/>
</dbReference>
<dbReference type="PRINTS" id="PR00148">
    <property type="entry name" value="ENOLASE"/>
</dbReference>
<dbReference type="SFLD" id="SFLDF00002">
    <property type="entry name" value="enolase"/>
    <property type="match status" value="1"/>
</dbReference>
<dbReference type="SFLD" id="SFLDG00178">
    <property type="entry name" value="enolase"/>
    <property type="match status" value="1"/>
</dbReference>
<dbReference type="SMART" id="SM01192">
    <property type="entry name" value="Enolase_C"/>
    <property type="match status" value="1"/>
</dbReference>
<dbReference type="SMART" id="SM01193">
    <property type="entry name" value="Enolase_N"/>
    <property type="match status" value="1"/>
</dbReference>
<dbReference type="SUPFAM" id="SSF51604">
    <property type="entry name" value="Enolase C-terminal domain-like"/>
    <property type="match status" value="1"/>
</dbReference>
<dbReference type="SUPFAM" id="SSF54826">
    <property type="entry name" value="Enolase N-terminal domain-like"/>
    <property type="match status" value="1"/>
</dbReference>
<dbReference type="PROSITE" id="PS00164">
    <property type="entry name" value="ENOLASE"/>
    <property type="match status" value="1"/>
</dbReference>
<proteinExistence type="inferred from homology"/>
<protein>
    <recommendedName>
        <fullName evidence="1">Enolase</fullName>
        <ecNumber evidence="1">4.2.1.11</ecNumber>
    </recommendedName>
    <alternativeName>
        <fullName evidence="1">2-phospho-D-glycerate hydro-lyase</fullName>
    </alternativeName>
    <alternativeName>
        <fullName evidence="1">2-phosphoglycerate dehydratase</fullName>
    </alternativeName>
</protein>